<sequence length="783" mass="87812">MNLERSERIEIPVLPLRDVVVYPHMVIPLFVGREKSISCLETAMETNKQVLLVAQKQADTDEPTVDDLFEVGTVATILQLLKLPDGTVKVLVEGQQRAKINHFKESDFFLAEAEFIVTPELDEREQEVIVRSAINQFEGFIKLNKKIPPEVLTSLNGIDEAARLADTIAAHMPLKLVDKQQVLEIIDVTERLEFLMGQMESEIDLLQVEKRIRGRVKKQMEKSQREYYLNEQMKAIQKELGEMEDAPDEFETLQKKIDESKMPQEAREKTEQELQKLKMMSPMSAEATVVRSYIDWMVSVPWTKRSKVKKNLAKAEEILNEDHYGLERVKERILEYLAVQNRINKLKGPILCLVGPPGVGKTSLGRSIASATGRKYVRMALGGVRDEAEIRGHRRTYIGSLPGKLIQKMSKVGVKNPLFLLDEIDKMSSDMRGDPASALLEVLDPEQNNSFNDHYLEVDYDLSDVMFVATSNSMNIPGPLLDRMEVIRLSGYTEDEKLNIAKRHLVEKQVQRNGLKPNEIVIEDSAIIGIIRYYTREAGVRGLEREISKICRKAVKNILLDKDIKSVTVTMDNLKEYLGVQRFDYGKADESNRIGQVTGLAWTEVGGDLLTIETQSMPGKGKLTQTGSLGDVMQESIQAAMTVVRSRADKLGINSDFYEKKDIHVHVPEGATPKDGPSAGTAMCTALVSALTGNPVKAEVAMTGEITLRGEVLPIGGLKEKLLAAHRGGIKTVLIPKDNERDLEEIPENVIADLQVIPVQWIDEVLKVALERDPTGVEFEAKK</sequence>
<name>LON_VIBPA</name>
<reference key="1">
    <citation type="journal article" date="1997" name="J. Bacteriol.">
        <title>The lonS gene regulates swarmer cell differentiation of Vibrio parahaemolyticus.</title>
        <authorList>
            <person name="Stewart B.J."/>
            <person name="Enos-Berlage J.L."/>
            <person name="McCarter L.L."/>
        </authorList>
    </citation>
    <scope>NUCLEOTIDE SEQUENCE [GENOMIC DNA]</scope>
    <source>
        <strain>BB22</strain>
    </source>
</reference>
<reference key="2">
    <citation type="journal article" date="2003" name="Lancet">
        <title>Genome sequence of Vibrio parahaemolyticus: a pathogenic mechanism distinct from that of V. cholerae.</title>
        <authorList>
            <person name="Makino K."/>
            <person name="Oshima K."/>
            <person name="Kurokawa K."/>
            <person name="Yokoyama K."/>
            <person name="Uda T."/>
            <person name="Tagomori K."/>
            <person name="Iijima Y."/>
            <person name="Najima M."/>
            <person name="Nakano M."/>
            <person name="Yamashita A."/>
            <person name="Kubota Y."/>
            <person name="Kimura S."/>
            <person name="Yasunaga T."/>
            <person name="Honda T."/>
            <person name="Shinagawa H."/>
            <person name="Hattori M."/>
            <person name="Iida T."/>
        </authorList>
    </citation>
    <scope>NUCLEOTIDE SEQUENCE [LARGE SCALE GENOMIC DNA]</scope>
    <source>
        <strain>RIMD 2210633</strain>
    </source>
</reference>
<comment type="function">
    <text evidence="1">ATP-dependent serine protease that mediates the selective degradation of mutant and abnormal proteins as well as certain short-lived regulatory proteins. Required for cellular homeostasis and for survival from DNA damage and developmental changes induced by stress. Degrades polypeptides processively to yield small peptide fragments that are 5 to 10 amino acids long. Binds to DNA in a double-stranded, site-specific manner (By similarity). Regulates swarmer cell differentiation of V.parahaemolyticus.</text>
</comment>
<comment type="catalytic activity">
    <reaction evidence="1">
        <text>Hydrolysis of proteins in presence of ATP.</text>
        <dbReference type="EC" id="3.4.21.53"/>
    </reaction>
</comment>
<comment type="subunit">
    <text evidence="1">Homohexamer. Organized in a ring with a central cavity.</text>
</comment>
<comment type="subcellular location">
    <subcellularLocation>
        <location evidence="1">Cytoplasm</location>
    </subcellularLocation>
</comment>
<comment type="induction">
    <text evidence="1">By heat shock.</text>
</comment>
<comment type="similarity">
    <text evidence="1">Belongs to the peptidase S16 family.</text>
</comment>
<feature type="chain" id="PRO_0000076147" description="Lon protease">
    <location>
        <begin position="1"/>
        <end position="783"/>
    </location>
</feature>
<feature type="domain" description="Lon N-terminal" evidence="3">
    <location>
        <begin position="11"/>
        <end position="203"/>
    </location>
</feature>
<feature type="domain" description="Lon proteolytic" evidence="2">
    <location>
        <begin position="591"/>
        <end position="772"/>
    </location>
</feature>
<feature type="active site" evidence="1">
    <location>
        <position position="678"/>
    </location>
</feature>
<feature type="active site" evidence="1">
    <location>
        <position position="721"/>
    </location>
</feature>
<feature type="binding site" evidence="1">
    <location>
        <begin position="355"/>
        <end position="362"/>
    </location>
    <ligand>
        <name>ATP</name>
        <dbReference type="ChEBI" id="CHEBI:30616"/>
    </ligand>
</feature>
<feature type="sequence conflict" description="In Ref. 1; AAC44747." evidence="4" ref="1">
    <original>Q</original>
    <variation>P</variation>
    <location>
        <position position="136"/>
    </location>
</feature>
<feature type="sequence conflict" description="In Ref. 1; AAC44747." evidence="4" ref="1">
    <original>R</original>
    <variation>P</variation>
    <location>
        <position position="163"/>
    </location>
</feature>
<feature type="sequence conflict" description="In Ref. 1; AAC44747." evidence="4" ref="1">
    <original>Q</original>
    <variation>R</variation>
    <location>
        <position position="760"/>
    </location>
</feature>
<gene>
    <name evidence="1" type="primary">lon</name>
    <name type="synonym">lonS</name>
    <name type="ordered locus">VP0919</name>
</gene>
<dbReference type="EC" id="3.4.21.53" evidence="1"/>
<dbReference type="EMBL" id="U66708">
    <property type="protein sequence ID" value="AAC44747.1"/>
    <property type="molecule type" value="Genomic_DNA"/>
</dbReference>
<dbReference type="EMBL" id="BA000031">
    <property type="protein sequence ID" value="BAC59182.1"/>
    <property type="molecule type" value="Genomic_DNA"/>
</dbReference>
<dbReference type="RefSeq" id="NP_797298.1">
    <property type="nucleotide sequence ID" value="NC_004603.1"/>
</dbReference>
<dbReference type="RefSeq" id="WP_005493728.1">
    <property type="nucleotide sequence ID" value="NC_004603.1"/>
</dbReference>
<dbReference type="SMR" id="P74956"/>
<dbReference type="MEROPS" id="S16.001"/>
<dbReference type="GeneID" id="1188417"/>
<dbReference type="KEGG" id="vpa:VP0919"/>
<dbReference type="PATRIC" id="fig|223926.6.peg.871"/>
<dbReference type="eggNOG" id="COG0466">
    <property type="taxonomic scope" value="Bacteria"/>
</dbReference>
<dbReference type="HOGENOM" id="CLU_004109_4_3_6"/>
<dbReference type="Proteomes" id="UP000002493">
    <property type="component" value="Chromosome 1"/>
</dbReference>
<dbReference type="GO" id="GO:0005737">
    <property type="term" value="C:cytoplasm"/>
    <property type="evidence" value="ECO:0007669"/>
    <property type="project" value="UniProtKB-SubCell"/>
</dbReference>
<dbReference type="GO" id="GO:0005524">
    <property type="term" value="F:ATP binding"/>
    <property type="evidence" value="ECO:0007669"/>
    <property type="project" value="UniProtKB-UniRule"/>
</dbReference>
<dbReference type="GO" id="GO:0016887">
    <property type="term" value="F:ATP hydrolysis activity"/>
    <property type="evidence" value="ECO:0007669"/>
    <property type="project" value="UniProtKB-UniRule"/>
</dbReference>
<dbReference type="GO" id="GO:0004176">
    <property type="term" value="F:ATP-dependent peptidase activity"/>
    <property type="evidence" value="ECO:0007669"/>
    <property type="project" value="UniProtKB-UniRule"/>
</dbReference>
<dbReference type="GO" id="GO:0043565">
    <property type="term" value="F:sequence-specific DNA binding"/>
    <property type="evidence" value="ECO:0007669"/>
    <property type="project" value="UniProtKB-UniRule"/>
</dbReference>
<dbReference type="GO" id="GO:0004252">
    <property type="term" value="F:serine-type endopeptidase activity"/>
    <property type="evidence" value="ECO:0007669"/>
    <property type="project" value="UniProtKB-UniRule"/>
</dbReference>
<dbReference type="GO" id="GO:0034605">
    <property type="term" value="P:cellular response to heat"/>
    <property type="evidence" value="ECO:0007669"/>
    <property type="project" value="UniProtKB-UniRule"/>
</dbReference>
<dbReference type="GO" id="GO:0006515">
    <property type="term" value="P:protein quality control for misfolded or incompletely synthesized proteins"/>
    <property type="evidence" value="ECO:0007669"/>
    <property type="project" value="UniProtKB-UniRule"/>
</dbReference>
<dbReference type="CDD" id="cd19500">
    <property type="entry name" value="RecA-like_Lon"/>
    <property type="match status" value="1"/>
</dbReference>
<dbReference type="FunFam" id="1.10.8.60:FF:000035">
    <property type="entry name" value="Lon protease"/>
    <property type="match status" value="1"/>
</dbReference>
<dbReference type="FunFam" id="1.20.58.1480:FF:000001">
    <property type="entry name" value="Lon protease"/>
    <property type="match status" value="1"/>
</dbReference>
<dbReference type="FunFam" id="2.30.130.40:FF:000001">
    <property type="entry name" value="Lon protease"/>
    <property type="match status" value="1"/>
</dbReference>
<dbReference type="FunFam" id="3.30.230.10:FF:000010">
    <property type="entry name" value="Lon protease"/>
    <property type="match status" value="1"/>
</dbReference>
<dbReference type="FunFam" id="1.20.5.5270:FF:000002">
    <property type="entry name" value="Lon protease homolog"/>
    <property type="match status" value="1"/>
</dbReference>
<dbReference type="FunFam" id="3.40.50.300:FF:000021">
    <property type="entry name" value="Lon protease homolog"/>
    <property type="match status" value="1"/>
</dbReference>
<dbReference type="Gene3D" id="1.10.8.60">
    <property type="match status" value="1"/>
</dbReference>
<dbReference type="Gene3D" id="1.20.5.5270">
    <property type="match status" value="1"/>
</dbReference>
<dbReference type="Gene3D" id="1.20.58.1480">
    <property type="match status" value="1"/>
</dbReference>
<dbReference type="Gene3D" id="3.30.230.10">
    <property type="match status" value="1"/>
</dbReference>
<dbReference type="Gene3D" id="2.30.130.40">
    <property type="entry name" value="LON domain-like"/>
    <property type="match status" value="1"/>
</dbReference>
<dbReference type="Gene3D" id="3.40.50.300">
    <property type="entry name" value="P-loop containing nucleotide triphosphate hydrolases"/>
    <property type="match status" value="1"/>
</dbReference>
<dbReference type="HAMAP" id="MF_01973">
    <property type="entry name" value="lon_bact"/>
    <property type="match status" value="1"/>
</dbReference>
<dbReference type="InterPro" id="IPR003593">
    <property type="entry name" value="AAA+_ATPase"/>
</dbReference>
<dbReference type="InterPro" id="IPR003959">
    <property type="entry name" value="ATPase_AAA_core"/>
</dbReference>
<dbReference type="InterPro" id="IPR027543">
    <property type="entry name" value="Lon_bac"/>
</dbReference>
<dbReference type="InterPro" id="IPR004815">
    <property type="entry name" value="Lon_bac/euk-typ"/>
</dbReference>
<dbReference type="InterPro" id="IPR054594">
    <property type="entry name" value="Lon_lid"/>
</dbReference>
<dbReference type="InterPro" id="IPR008269">
    <property type="entry name" value="Lon_proteolytic"/>
</dbReference>
<dbReference type="InterPro" id="IPR027065">
    <property type="entry name" value="Lon_Prtase"/>
</dbReference>
<dbReference type="InterPro" id="IPR003111">
    <property type="entry name" value="Lon_prtase_N"/>
</dbReference>
<dbReference type="InterPro" id="IPR046336">
    <property type="entry name" value="Lon_prtase_N_sf"/>
</dbReference>
<dbReference type="InterPro" id="IPR027417">
    <property type="entry name" value="P-loop_NTPase"/>
</dbReference>
<dbReference type="InterPro" id="IPR015947">
    <property type="entry name" value="PUA-like_sf"/>
</dbReference>
<dbReference type="InterPro" id="IPR020568">
    <property type="entry name" value="Ribosomal_Su5_D2-typ_SF"/>
</dbReference>
<dbReference type="InterPro" id="IPR014721">
    <property type="entry name" value="Ribsml_uS5_D2-typ_fold_subgr"/>
</dbReference>
<dbReference type="NCBIfam" id="TIGR00763">
    <property type="entry name" value="lon"/>
    <property type="match status" value="1"/>
</dbReference>
<dbReference type="NCBIfam" id="NF008053">
    <property type="entry name" value="PRK10787.1"/>
    <property type="match status" value="1"/>
</dbReference>
<dbReference type="PANTHER" id="PTHR10046">
    <property type="entry name" value="ATP DEPENDENT LON PROTEASE FAMILY MEMBER"/>
    <property type="match status" value="1"/>
</dbReference>
<dbReference type="Pfam" id="PF00004">
    <property type="entry name" value="AAA"/>
    <property type="match status" value="1"/>
</dbReference>
<dbReference type="Pfam" id="PF05362">
    <property type="entry name" value="Lon_C"/>
    <property type="match status" value="1"/>
</dbReference>
<dbReference type="Pfam" id="PF22667">
    <property type="entry name" value="Lon_lid"/>
    <property type="match status" value="1"/>
</dbReference>
<dbReference type="Pfam" id="PF02190">
    <property type="entry name" value="LON_substr_bdg"/>
    <property type="match status" value="1"/>
</dbReference>
<dbReference type="PIRSF" id="PIRSF001174">
    <property type="entry name" value="Lon_proteas"/>
    <property type="match status" value="1"/>
</dbReference>
<dbReference type="PRINTS" id="PR00830">
    <property type="entry name" value="ENDOLAPTASE"/>
</dbReference>
<dbReference type="SMART" id="SM00382">
    <property type="entry name" value="AAA"/>
    <property type="match status" value="1"/>
</dbReference>
<dbReference type="SMART" id="SM00464">
    <property type="entry name" value="LON"/>
    <property type="match status" value="1"/>
</dbReference>
<dbReference type="SUPFAM" id="SSF52540">
    <property type="entry name" value="P-loop containing nucleoside triphosphate hydrolases"/>
    <property type="match status" value="1"/>
</dbReference>
<dbReference type="SUPFAM" id="SSF88697">
    <property type="entry name" value="PUA domain-like"/>
    <property type="match status" value="1"/>
</dbReference>
<dbReference type="SUPFAM" id="SSF54211">
    <property type="entry name" value="Ribosomal protein S5 domain 2-like"/>
    <property type="match status" value="1"/>
</dbReference>
<dbReference type="PROSITE" id="PS51787">
    <property type="entry name" value="LON_N"/>
    <property type="match status" value="1"/>
</dbReference>
<dbReference type="PROSITE" id="PS51786">
    <property type="entry name" value="LON_PROTEOLYTIC"/>
    <property type="match status" value="1"/>
</dbReference>
<evidence type="ECO:0000255" key="1">
    <source>
        <dbReference type="HAMAP-Rule" id="MF_01973"/>
    </source>
</evidence>
<evidence type="ECO:0000255" key="2">
    <source>
        <dbReference type="PROSITE-ProRule" id="PRU01122"/>
    </source>
</evidence>
<evidence type="ECO:0000255" key="3">
    <source>
        <dbReference type="PROSITE-ProRule" id="PRU01123"/>
    </source>
</evidence>
<evidence type="ECO:0000305" key="4"/>
<keyword id="KW-0067">ATP-binding</keyword>
<keyword id="KW-0963">Cytoplasm</keyword>
<keyword id="KW-0378">Hydrolase</keyword>
<keyword id="KW-0547">Nucleotide-binding</keyword>
<keyword id="KW-0645">Protease</keyword>
<keyword id="KW-0720">Serine protease</keyword>
<keyword id="KW-0346">Stress response</keyword>
<proteinExistence type="inferred from homology"/>
<organism>
    <name type="scientific">Vibrio parahaemolyticus serotype O3:K6 (strain RIMD 2210633)</name>
    <dbReference type="NCBI Taxonomy" id="223926"/>
    <lineage>
        <taxon>Bacteria</taxon>
        <taxon>Pseudomonadati</taxon>
        <taxon>Pseudomonadota</taxon>
        <taxon>Gammaproteobacteria</taxon>
        <taxon>Vibrionales</taxon>
        <taxon>Vibrionaceae</taxon>
        <taxon>Vibrio</taxon>
    </lineage>
</organism>
<accession>P74956</accession>
<protein>
    <recommendedName>
        <fullName evidence="1">Lon protease</fullName>
        <ecNumber evidence="1">3.4.21.53</ecNumber>
    </recommendedName>
    <alternativeName>
        <fullName evidence="1">ATP-dependent protease La</fullName>
    </alternativeName>
</protein>